<proteinExistence type="inferred from homology"/>
<reference key="1">
    <citation type="journal article" date="2011" name="J. Bacteriol.">
        <title>Comparative genomics of 28 Salmonella enterica isolates: evidence for CRISPR-mediated adaptive sublineage evolution.</title>
        <authorList>
            <person name="Fricke W.F."/>
            <person name="Mammel M.K."/>
            <person name="McDermott P.F."/>
            <person name="Tartera C."/>
            <person name="White D.G."/>
            <person name="Leclerc J.E."/>
            <person name="Ravel J."/>
            <person name="Cebula T.A."/>
        </authorList>
    </citation>
    <scope>NUCLEOTIDE SEQUENCE [LARGE SCALE GENOMIC DNA]</scope>
    <source>
        <strain>CVM19633</strain>
    </source>
</reference>
<name>YACG_SALSV</name>
<accession>B4TXI7</accession>
<organism>
    <name type="scientific">Salmonella schwarzengrund (strain CVM19633)</name>
    <dbReference type="NCBI Taxonomy" id="439843"/>
    <lineage>
        <taxon>Bacteria</taxon>
        <taxon>Pseudomonadati</taxon>
        <taxon>Pseudomonadota</taxon>
        <taxon>Gammaproteobacteria</taxon>
        <taxon>Enterobacterales</taxon>
        <taxon>Enterobacteriaceae</taxon>
        <taxon>Salmonella</taxon>
    </lineage>
</organism>
<protein>
    <recommendedName>
        <fullName evidence="1">DNA gyrase inhibitor YacG</fullName>
    </recommendedName>
</protein>
<dbReference type="EMBL" id="CP001127">
    <property type="protein sequence ID" value="ACF88836.1"/>
    <property type="molecule type" value="Genomic_DNA"/>
</dbReference>
<dbReference type="RefSeq" id="WP_001286419.1">
    <property type="nucleotide sequence ID" value="NC_011094.1"/>
</dbReference>
<dbReference type="SMR" id="B4TXI7"/>
<dbReference type="KEGG" id="sew:SeSA_A0155"/>
<dbReference type="HOGENOM" id="CLU_178280_3_1_6"/>
<dbReference type="Proteomes" id="UP000001865">
    <property type="component" value="Chromosome"/>
</dbReference>
<dbReference type="GO" id="GO:0008657">
    <property type="term" value="F:DNA topoisomerase type II (double strand cut, ATP-hydrolyzing) inhibitor activity"/>
    <property type="evidence" value="ECO:0007669"/>
    <property type="project" value="UniProtKB-UniRule"/>
</dbReference>
<dbReference type="GO" id="GO:0008270">
    <property type="term" value="F:zinc ion binding"/>
    <property type="evidence" value="ECO:0007669"/>
    <property type="project" value="UniProtKB-UniRule"/>
</dbReference>
<dbReference type="GO" id="GO:0006355">
    <property type="term" value="P:regulation of DNA-templated transcription"/>
    <property type="evidence" value="ECO:0007669"/>
    <property type="project" value="InterPro"/>
</dbReference>
<dbReference type="Gene3D" id="3.30.50.10">
    <property type="entry name" value="Erythroid Transcription Factor GATA-1, subunit A"/>
    <property type="match status" value="1"/>
</dbReference>
<dbReference type="HAMAP" id="MF_00649">
    <property type="entry name" value="DNA_gyrase_inhibitor_YacG"/>
    <property type="match status" value="1"/>
</dbReference>
<dbReference type="InterPro" id="IPR005584">
    <property type="entry name" value="DNA_gyrase_inhibitor_YacG"/>
</dbReference>
<dbReference type="InterPro" id="IPR013088">
    <property type="entry name" value="Znf_NHR/GATA"/>
</dbReference>
<dbReference type="NCBIfam" id="NF001638">
    <property type="entry name" value="PRK00418.1"/>
    <property type="match status" value="1"/>
</dbReference>
<dbReference type="PANTHER" id="PTHR36150">
    <property type="entry name" value="DNA GYRASE INHIBITOR YACG"/>
    <property type="match status" value="1"/>
</dbReference>
<dbReference type="PANTHER" id="PTHR36150:SF1">
    <property type="entry name" value="DNA GYRASE INHIBITOR YACG"/>
    <property type="match status" value="1"/>
</dbReference>
<dbReference type="Pfam" id="PF03884">
    <property type="entry name" value="YacG"/>
    <property type="match status" value="1"/>
</dbReference>
<dbReference type="SUPFAM" id="SSF57716">
    <property type="entry name" value="Glucocorticoid receptor-like (DNA-binding domain)"/>
    <property type="match status" value="1"/>
</dbReference>
<gene>
    <name evidence="1" type="primary">yacG</name>
    <name type="ordered locus">SeSA_A0155</name>
</gene>
<comment type="function">
    <text evidence="1">Inhibits all the catalytic activities of DNA gyrase by preventing its interaction with DNA. Acts by binding directly to the C-terminal domain of GyrB, which probably disrupts DNA binding by the gyrase.</text>
</comment>
<comment type="cofactor">
    <cofactor evidence="1">
        <name>Zn(2+)</name>
        <dbReference type="ChEBI" id="CHEBI:29105"/>
    </cofactor>
    <text evidence="1">Binds 1 zinc ion.</text>
</comment>
<comment type="subunit">
    <text evidence="1">Interacts with GyrB.</text>
</comment>
<comment type="similarity">
    <text evidence="1">Belongs to the DNA gyrase inhibitor YacG family.</text>
</comment>
<evidence type="ECO:0000255" key="1">
    <source>
        <dbReference type="HAMAP-Rule" id="MF_00649"/>
    </source>
</evidence>
<feature type="chain" id="PRO_1000130978" description="DNA gyrase inhibitor YacG">
    <location>
        <begin position="1"/>
        <end position="63"/>
    </location>
</feature>
<feature type="binding site" evidence="1">
    <location>
        <position position="9"/>
    </location>
    <ligand>
        <name>Zn(2+)</name>
        <dbReference type="ChEBI" id="CHEBI:29105"/>
    </ligand>
</feature>
<feature type="binding site" evidence="1">
    <location>
        <position position="12"/>
    </location>
    <ligand>
        <name>Zn(2+)</name>
        <dbReference type="ChEBI" id="CHEBI:29105"/>
    </ligand>
</feature>
<feature type="binding site" evidence="1">
    <location>
        <position position="28"/>
    </location>
    <ligand>
        <name>Zn(2+)</name>
        <dbReference type="ChEBI" id="CHEBI:29105"/>
    </ligand>
</feature>
<feature type="binding site" evidence="1">
    <location>
        <position position="32"/>
    </location>
    <ligand>
        <name>Zn(2+)</name>
        <dbReference type="ChEBI" id="CHEBI:29105"/>
    </ligand>
</feature>
<sequence length="63" mass="7050">MSDVTVVNCPTCGKPVVWGEISPFRPFCSKRCQLIDLGEWAAEEKRIASSGDQSDSDDWSEER</sequence>
<keyword id="KW-0479">Metal-binding</keyword>
<keyword id="KW-0862">Zinc</keyword>